<proteinExistence type="inferred from homology"/>
<reference key="1">
    <citation type="journal article" date="2005" name="Nature">
        <title>Genome sequencing and analysis of Aspergillus oryzae.</title>
        <authorList>
            <person name="Machida M."/>
            <person name="Asai K."/>
            <person name="Sano M."/>
            <person name="Tanaka T."/>
            <person name="Kumagai T."/>
            <person name="Terai G."/>
            <person name="Kusumoto K."/>
            <person name="Arima T."/>
            <person name="Akita O."/>
            <person name="Kashiwagi Y."/>
            <person name="Abe K."/>
            <person name="Gomi K."/>
            <person name="Horiuchi H."/>
            <person name="Kitamoto K."/>
            <person name="Kobayashi T."/>
            <person name="Takeuchi M."/>
            <person name="Denning D.W."/>
            <person name="Galagan J.E."/>
            <person name="Nierman W.C."/>
            <person name="Yu J."/>
            <person name="Archer D.B."/>
            <person name="Bennett J.W."/>
            <person name="Bhatnagar D."/>
            <person name="Cleveland T.E."/>
            <person name="Fedorova N.D."/>
            <person name="Gotoh O."/>
            <person name="Horikawa H."/>
            <person name="Hosoyama A."/>
            <person name="Ichinomiya M."/>
            <person name="Igarashi R."/>
            <person name="Iwashita K."/>
            <person name="Juvvadi P.R."/>
            <person name="Kato M."/>
            <person name="Kato Y."/>
            <person name="Kin T."/>
            <person name="Kokubun A."/>
            <person name="Maeda H."/>
            <person name="Maeyama N."/>
            <person name="Maruyama J."/>
            <person name="Nagasaki H."/>
            <person name="Nakajima T."/>
            <person name="Oda K."/>
            <person name="Okada K."/>
            <person name="Paulsen I."/>
            <person name="Sakamoto K."/>
            <person name="Sawano T."/>
            <person name="Takahashi M."/>
            <person name="Takase K."/>
            <person name="Terabayashi Y."/>
            <person name="Wortman J.R."/>
            <person name="Yamada O."/>
            <person name="Yamagata Y."/>
            <person name="Anazawa H."/>
            <person name="Hata Y."/>
            <person name="Koide Y."/>
            <person name="Komori T."/>
            <person name="Koyama Y."/>
            <person name="Minetoki T."/>
            <person name="Suharnan S."/>
            <person name="Tanaka A."/>
            <person name="Isono K."/>
            <person name="Kuhara S."/>
            <person name="Ogasawara N."/>
            <person name="Kikuchi H."/>
        </authorList>
    </citation>
    <scope>NUCLEOTIDE SEQUENCE [LARGE SCALE GENOMIC DNA]</scope>
    <source>
        <strain>ATCC 42149 / RIB 40</strain>
    </source>
</reference>
<protein>
    <recommendedName>
        <fullName>Autophagy-related protein 17</fullName>
    </recommendedName>
</protein>
<comment type="function">
    <text evidence="1">Autophagy-specific protein that functions in response to autophagy-inducing signals as a scaffold to recruit other ATG proteins to organize pre-autophagosomal structure (PAS) formation. Modulates the timing and magnitude of the autophagy response, such as the size of the sequestering vesicles. Plays particularly a role in pexophagy and nucleophagy (By similarity).</text>
</comment>
<comment type="subcellular location">
    <subcellularLocation>
        <location evidence="1">Cytoplasm</location>
    </subcellularLocation>
    <subcellularLocation>
        <location evidence="1">Preautophagosomal structure membrane</location>
        <topology evidence="1">Peripheral membrane protein</topology>
    </subcellularLocation>
</comment>
<comment type="similarity">
    <text evidence="4">Belongs to the ATG17 family.</text>
</comment>
<dbReference type="EMBL" id="BA000051">
    <property type="protein sequence ID" value="BAE59628.1"/>
    <property type="molecule type" value="Genomic_DNA"/>
</dbReference>
<dbReference type="RefSeq" id="XP_001821630.1">
    <property type="nucleotide sequence ID" value="XM_001821578.1"/>
</dbReference>
<dbReference type="SMR" id="Q2UFN7"/>
<dbReference type="STRING" id="510516.Q2UFN7"/>
<dbReference type="EnsemblFungi" id="BAE59628">
    <property type="protein sequence ID" value="BAE59628"/>
    <property type="gene ID" value="AO090026000134"/>
</dbReference>
<dbReference type="GeneID" id="5993658"/>
<dbReference type="KEGG" id="aor:AO090026000134"/>
<dbReference type="VEuPathDB" id="FungiDB:AO090026000134"/>
<dbReference type="HOGENOM" id="CLU_028356_0_0_1"/>
<dbReference type="OMA" id="THVWRAN"/>
<dbReference type="OrthoDB" id="102305at5052"/>
<dbReference type="Proteomes" id="UP000006564">
    <property type="component" value="Chromosome 3"/>
</dbReference>
<dbReference type="GO" id="GO:1990316">
    <property type="term" value="C:Atg1/ULK1 kinase complex"/>
    <property type="evidence" value="ECO:0007669"/>
    <property type="project" value="TreeGrafter"/>
</dbReference>
<dbReference type="GO" id="GO:0034045">
    <property type="term" value="C:phagophore assembly site membrane"/>
    <property type="evidence" value="ECO:0007669"/>
    <property type="project" value="UniProtKB-SubCell"/>
</dbReference>
<dbReference type="GO" id="GO:0060090">
    <property type="term" value="F:molecular adaptor activity"/>
    <property type="evidence" value="ECO:0007669"/>
    <property type="project" value="TreeGrafter"/>
</dbReference>
<dbReference type="GO" id="GO:0030295">
    <property type="term" value="F:protein kinase activator activity"/>
    <property type="evidence" value="ECO:0007669"/>
    <property type="project" value="TreeGrafter"/>
</dbReference>
<dbReference type="GO" id="GO:0000045">
    <property type="term" value="P:autophagosome assembly"/>
    <property type="evidence" value="ECO:0007669"/>
    <property type="project" value="TreeGrafter"/>
</dbReference>
<dbReference type="GO" id="GO:0000422">
    <property type="term" value="P:autophagy of mitochondrion"/>
    <property type="evidence" value="ECO:0007669"/>
    <property type="project" value="TreeGrafter"/>
</dbReference>
<dbReference type="GO" id="GO:0034727">
    <property type="term" value="P:piecemeal microautophagy of the nucleus"/>
    <property type="evidence" value="ECO:0007669"/>
    <property type="project" value="TreeGrafter"/>
</dbReference>
<dbReference type="InterPro" id="IPR007240">
    <property type="entry name" value="Atg17"/>
</dbReference>
<dbReference type="InterPro" id="IPR045326">
    <property type="entry name" value="ATG17-like_dom"/>
</dbReference>
<dbReference type="PANTHER" id="PTHR28005">
    <property type="entry name" value="AUTOPHAGY-RELATED PROTEIN 17"/>
    <property type="match status" value="1"/>
</dbReference>
<dbReference type="PANTHER" id="PTHR28005:SF1">
    <property type="entry name" value="AUTOPHAGY-RELATED PROTEIN 17"/>
    <property type="match status" value="1"/>
</dbReference>
<dbReference type="Pfam" id="PF04108">
    <property type="entry name" value="ATG17_like"/>
    <property type="match status" value="1"/>
</dbReference>
<evidence type="ECO:0000250" key="1"/>
<evidence type="ECO:0000255" key="2"/>
<evidence type="ECO:0000256" key="3">
    <source>
        <dbReference type="SAM" id="MobiDB-lite"/>
    </source>
</evidence>
<evidence type="ECO:0000305" key="4"/>
<organism>
    <name type="scientific">Aspergillus oryzae (strain ATCC 42149 / RIB 40)</name>
    <name type="common">Yellow koji mold</name>
    <dbReference type="NCBI Taxonomy" id="510516"/>
    <lineage>
        <taxon>Eukaryota</taxon>
        <taxon>Fungi</taxon>
        <taxon>Dikarya</taxon>
        <taxon>Ascomycota</taxon>
        <taxon>Pezizomycotina</taxon>
        <taxon>Eurotiomycetes</taxon>
        <taxon>Eurotiomycetidae</taxon>
        <taxon>Eurotiales</taxon>
        <taxon>Aspergillaceae</taxon>
        <taxon>Aspergillus</taxon>
        <taxon>Aspergillus subgen. Circumdati</taxon>
    </lineage>
</organism>
<name>ATG17_ASPOR</name>
<gene>
    <name type="primary">atg17</name>
    <name type="ORF">AO090026000134</name>
</gene>
<feature type="chain" id="PRO_0000317981" description="Autophagy-related protein 17">
    <location>
        <begin position="1"/>
        <end position="550"/>
    </location>
</feature>
<feature type="region of interest" description="Disordered" evidence="3">
    <location>
        <begin position="1"/>
        <end position="25"/>
    </location>
</feature>
<feature type="region of interest" description="Disordered" evidence="3">
    <location>
        <begin position="204"/>
        <end position="224"/>
    </location>
</feature>
<feature type="region of interest" description="Disordered" evidence="3">
    <location>
        <begin position="492"/>
        <end position="527"/>
    </location>
</feature>
<feature type="coiled-coil region" evidence="2">
    <location>
        <begin position="317"/>
        <end position="350"/>
    </location>
</feature>
<feature type="coiled-coil region" evidence="2">
    <location>
        <begin position="427"/>
        <end position="457"/>
    </location>
</feature>
<feature type="compositionally biased region" description="Low complexity" evidence="3">
    <location>
        <begin position="495"/>
        <end position="507"/>
    </location>
</feature>
<keyword id="KW-0072">Autophagy</keyword>
<keyword id="KW-0175">Coiled coil</keyword>
<keyword id="KW-0963">Cytoplasm</keyword>
<keyword id="KW-0472">Membrane</keyword>
<keyword id="KW-1185">Reference proteome</keyword>
<accession>Q2UFN7</accession>
<sequence>MSDSESSAISNNASDLNPSPGQENSMPQLETLISHLVAAKRSLSSINHVWRANEIVTAARSALEESVVVSARTGFLRRGLNNQLRLLYSVRTEVQEVSLRGRSEFATVLKSLDVADARLRKTLDLLRDTIVHASFRPEGEESKTLHDFVDERGVGELHTTLKRSIDRTNAAQADLESSNRAFDDELQSIKEALGNYRAATQLASSRTSASSSSPSTSNDSLPSLSSIPSMLHSLEMHAQEMANLLESLVRHFDLCVTAVKHTEGGGAAARSITGDVPATVHVNGRVGPNIEEGINANLNAPLDPLSNSEYQEMVSVLIKDAAEAEDVVMEIQDRIGEMETVLENVLAQRDSVLSVYNATTSVFKHLSTLASTRLSGYIAEAHSFTRVWHEEYEQIQSGLADLSDLNTLYDGFLEAYDGLILEVARRRQVRHRVEKVLRDAKQKLDQLYEEDVNARETFRVEQGDYLPSDIWPGIGREPMRIEFRRISGGNLKGIAAEPPDQDAAAAEPKQEARAVSSGDVGEDGEVIPELPKALVEEAIARFNARMRHLP</sequence>